<organism>
    <name type="scientific">Salmonella newport (strain SL254)</name>
    <dbReference type="NCBI Taxonomy" id="423368"/>
    <lineage>
        <taxon>Bacteria</taxon>
        <taxon>Pseudomonadati</taxon>
        <taxon>Pseudomonadota</taxon>
        <taxon>Gammaproteobacteria</taxon>
        <taxon>Enterobacterales</taxon>
        <taxon>Enterobacteriaceae</taxon>
        <taxon>Salmonella</taxon>
    </lineage>
</organism>
<name>FLIT_SALNS</name>
<keyword id="KW-1005">Bacterial flagellum biogenesis</keyword>
<keyword id="KW-0143">Chaperone</keyword>
<keyword id="KW-0963">Cytoplasm</keyword>
<keyword id="KW-0678">Repressor</keyword>
<keyword id="KW-0804">Transcription</keyword>
<keyword id="KW-0805">Transcription regulation</keyword>
<evidence type="ECO:0000255" key="1">
    <source>
        <dbReference type="HAMAP-Rule" id="MF_01180"/>
    </source>
</evidence>
<reference key="1">
    <citation type="journal article" date="2011" name="J. Bacteriol.">
        <title>Comparative genomics of 28 Salmonella enterica isolates: evidence for CRISPR-mediated adaptive sublineage evolution.</title>
        <authorList>
            <person name="Fricke W.F."/>
            <person name="Mammel M.K."/>
            <person name="McDermott P.F."/>
            <person name="Tartera C."/>
            <person name="White D.G."/>
            <person name="Leclerc J.E."/>
            <person name="Ravel J."/>
            <person name="Cebula T.A."/>
        </authorList>
    </citation>
    <scope>NUCLEOTIDE SEQUENCE [LARGE SCALE GENOMIC DNA]</scope>
    <source>
        <strain>SL254</strain>
    </source>
</reference>
<sequence length="122" mass="13705">MTSTVEFINRWQRIALLSQSLLELAQRGEWDLLLQQEVSYLQSIETVMEKQTPPGITRSIQDMVAGYIKQTLDNEQLLKGLLQQRLDELSSLIGQSTRQKSLNNAYGRLSGMLLVPDAPGAS</sequence>
<feature type="chain" id="PRO_1000138185" description="Flagellar protein FliT">
    <location>
        <begin position="1"/>
        <end position="122"/>
    </location>
</feature>
<feature type="region of interest" description="Required for homodimerization" evidence="1">
    <location>
        <begin position="1"/>
        <end position="50"/>
    </location>
</feature>
<feature type="region of interest" description="FliD binding" evidence="1">
    <location>
        <begin position="60"/>
        <end position="98"/>
    </location>
</feature>
<accession>B4SW68</accession>
<proteinExistence type="inferred from homology"/>
<protein>
    <recommendedName>
        <fullName evidence="1">Flagellar protein FliT</fullName>
    </recommendedName>
</protein>
<comment type="function">
    <text evidence="1">Dual-function protein that regulates the transcription of class 2 flagellar operons and that also acts as an export chaperone for the filament-capping protein FliD. As a transcriptional regulator, acts as an anti-FlhDC factor; it directly binds FlhC, thus inhibiting the binding of the FlhC/FlhD complex to class 2 promoters, resulting in decreased expression of class 2 flagellar operons. As a chaperone, effects FliD transition to the membrane by preventing its premature polymerization, and by directing it to the export apparatus.</text>
</comment>
<comment type="subunit">
    <text evidence="1">Homodimer. Interacts with FliD and FlhC.</text>
</comment>
<comment type="subcellular location">
    <subcellularLocation>
        <location evidence="1">Cytoplasm</location>
        <location evidence="1">Cytosol</location>
    </subcellularLocation>
</comment>
<comment type="similarity">
    <text evidence="1">Belongs to the FliT family.</text>
</comment>
<gene>
    <name evidence="1" type="primary">fliT</name>
    <name type="ordered locus">SNSL254_A2124</name>
</gene>
<dbReference type="EMBL" id="CP001113">
    <property type="protein sequence ID" value="ACF62936.1"/>
    <property type="molecule type" value="Genomic_DNA"/>
</dbReference>
<dbReference type="RefSeq" id="WP_000204899.1">
    <property type="nucleotide sequence ID" value="NZ_CCMR01000003.1"/>
</dbReference>
<dbReference type="SMR" id="B4SW68"/>
<dbReference type="KEGG" id="see:SNSL254_A2124"/>
<dbReference type="HOGENOM" id="CLU_155793_1_0_6"/>
<dbReference type="Proteomes" id="UP000008824">
    <property type="component" value="Chromosome"/>
</dbReference>
<dbReference type="GO" id="GO:0005829">
    <property type="term" value="C:cytosol"/>
    <property type="evidence" value="ECO:0007669"/>
    <property type="project" value="UniProtKB-SubCell"/>
</dbReference>
<dbReference type="GO" id="GO:0044781">
    <property type="term" value="P:bacterial-type flagellum organization"/>
    <property type="evidence" value="ECO:0007669"/>
    <property type="project" value="UniProtKB-KW"/>
</dbReference>
<dbReference type="GO" id="GO:1902209">
    <property type="term" value="P:negative regulation of bacterial-type flagellum assembly"/>
    <property type="evidence" value="ECO:0007669"/>
    <property type="project" value="UniProtKB-UniRule"/>
</dbReference>
<dbReference type="GO" id="GO:0006457">
    <property type="term" value="P:protein folding"/>
    <property type="evidence" value="ECO:0007669"/>
    <property type="project" value="UniProtKB-UniRule"/>
</dbReference>
<dbReference type="FunFam" id="1.20.58.380:FF:000002">
    <property type="entry name" value="Flagellar protein FliT"/>
    <property type="match status" value="1"/>
</dbReference>
<dbReference type="Gene3D" id="1.20.58.380">
    <property type="entry name" value="Flagellar protein flit"/>
    <property type="match status" value="1"/>
</dbReference>
<dbReference type="HAMAP" id="MF_01180">
    <property type="entry name" value="FliT"/>
    <property type="match status" value="1"/>
</dbReference>
<dbReference type="InterPro" id="IPR008622">
    <property type="entry name" value="FliT"/>
</dbReference>
<dbReference type="NCBIfam" id="NF007836">
    <property type="entry name" value="PRK10548.1"/>
    <property type="match status" value="1"/>
</dbReference>
<dbReference type="Pfam" id="PF05400">
    <property type="entry name" value="FliT"/>
    <property type="match status" value="1"/>
</dbReference>